<evidence type="ECO:0000250" key="1"/>
<evidence type="ECO:0000250" key="2">
    <source>
        <dbReference type="UniProtKB" id="P06169"/>
    </source>
</evidence>
<evidence type="ECO:0000269" key="3">
    <source>
    </source>
</evidence>
<evidence type="ECO:0000305" key="4"/>
<dbReference type="EC" id="4.1.1.1"/>
<dbReference type="EMBL" id="CU329670">
    <property type="protein sequence ID" value="CAA15920.1"/>
    <property type="molecule type" value="Genomic_DNA"/>
</dbReference>
<dbReference type="PIR" id="T11647">
    <property type="entry name" value="T11647"/>
</dbReference>
<dbReference type="SMR" id="O42873"/>
<dbReference type="BioGRID" id="279822">
    <property type="interactions" value="27"/>
</dbReference>
<dbReference type="FunCoup" id="O42873">
    <property type="interactions" value="171"/>
</dbReference>
<dbReference type="STRING" id="284812.O42873"/>
<dbReference type="iPTMnet" id="O42873"/>
<dbReference type="PaxDb" id="4896-SPAC3G9.11c.1"/>
<dbReference type="EnsemblFungi" id="SPAC3G9.11c.1">
    <property type="protein sequence ID" value="SPAC3G9.11c.1:pep"/>
    <property type="gene ID" value="SPAC3G9.11c"/>
</dbReference>
<dbReference type="KEGG" id="spo:2543400"/>
<dbReference type="PomBase" id="SPAC3G9.11c"/>
<dbReference type="VEuPathDB" id="FungiDB:SPAC3G9.11c"/>
<dbReference type="eggNOG" id="KOG1184">
    <property type="taxonomic scope" value="Eukaryota"/>
</dbReference>
<dbReference type="HOGENOM" id="CLU_013748_0_2_1"/>
<dbReference type="InParanoid" id="O42873"/>
<dbReference type="OMA" id="IREHFHA"/>
<dbReference type="PhylomeDB" id="O42873"/>
<dbReference type="PRO" id="PR:O42873"/>
<dbReference type="Proteomes" id="UP000002485">
    <property type="component" value="Chromosome I"/>
</dbReference>
<dbReference type="GO" id="GO:0005829">
    <property type="term" value="C:cytosol"/>
    <property type="evidence" value="ECO:0007005"/>
    <property type="project" value="PomBase"/>
</dbReference>
<dbReference type="GO" id="GO:0005634">
    <property type="term" value="C:nucleus"/>
    <property type="evidence" value="ECO:0007005"/>
    <property type="project" value="PomBase"/>
</dbReference>
<dbReference type="GO" id="GO:0000287">
    <property type="term" value="F:magnesium ion binding"/>
    <property type="evidence" value="ECO:0007669"/>
    <property type="project" value="InterPro"/>
</dbReference>
<dbReference type="GO" id="GO:0004737">
    <property type="term" value="F:pyruvate decarboxylase activity"/>
    <property type="evidence" value="ECO:0000318"/>
    <property type="project" value="GO_Central"/>
</dbReference>
<dbReference type="GO" id="GO:0030976">
    <property type="term" value="F:thiamine pyrophosphate binding"/>
    <property type="evidence" value="ECO:0007669"/>
    <property type="project" value="InterPro"/>
</dbReference>
<dbReference type="GO" id="GO:0000949">
    <property type="term" value="P:aromatic amino acid family catabolic process to alcohol via Ehrlich pathway"/>
    <property type="evidence" value="ECO:0000318"/>
    <property type="project" value="GO_Central"/>
</dbReference>
<dbReference type="GO" id="GO:0006113">
    <property type="term" value="P:fermentation"/>
    <property type="evidence" value="ECO:0000305"/>
    <property type="project" value="PomBase"/>
</dbReference>
<dbReference type="CDD" id="cd02005">
    <property type="entry name" value="TPP_PDC_IPDC"/>
    <property type="match status" value="1"/>
</dbReference>
<dbReference type="CDD" id="cd07038">
    <property type="entry name" value="TPP_PYR_PDC_IPDC_like"/>
    <property type="match status" value="1"/>
</dbReference>
<dbReference type="FunFam" id="3.40.50.970:FF:000019">
    <property type="entry name" value="Pyruvate decarboxylase isozyme"/>
    <property type="match status" value="1"/>
</dbReference>
<dbReference type="FunFam" id="3.40.50.970:FF:000024">
    <property type="entry name" value="Pyruvate decarboxylase isozyme"/>
    <property type="match status" value="1"/>
</dbReference>
<dbReference type="Gene3D" id="3.40.50.970">
    <property type="match status" value="2"/>
</dbReference>
<dbReference type="Gene3D" id="3.40.50.1220">
    <property type="entry name" value="TPP-binding domain"/>
    <property type="match status" value="1"/>
</dbReference>
<dbReference type="InterPro" id="IPR029035">
    <property type="entry name" value="DHS-like_NAD/FAD-binding_dom"/>
</dbReference>
<dbReference type="InterPro" id="IPR012110">
    <property type="entry name" value="PDC/IPDC-like"/>
</dbReference>
<dbReference type="InterPro" id="IPR029061">
    <property type="entry name" value="THDP-binding"/>
</dbReference>
<dbReference type="InterPro" id="IPR012000">
    <property type="entry name" value="Thiamin_PyroP_enz_cen_dom"/>
</dbReference>
<dbReference type="InterPro" id="IPR012001">
    <property type="entry name" value="Thiamin_PyroP_enz_TPP-bd_dom"/>
</dbReference>
<dbReference type="InterPro" id="IPR011766">
    <property type="entry name" value="TPP_enzyme_TPP-bd"/>
</dbReference>
<dbReference type="InterPro" id="IPR047214">
    <property type="entry name" value="TPP_PDC_IPDC"/>
</dbReference>
<dbReference type="InterPro" id="IPR047213">
    <property type="entry name" value="TPP_PYR_PDC_IPDC-like"/>
</dbReference>
<dbReference type="PANTHER" id="PTHR43452">
    <property type="entry name" value="PYRUVATE DECARBOXYLASE"/>
    <property type="match status" value="1"/>
</dbReference>
<dbReference type="PANTHER" id="PTHR43452:SF36">
    <property type="entry name" value="PYRUVATE DECARBOXYLASE C3G9.11C-RELATED"/>
    <property type="match status" value="1"/>
</dbReference>
<dbReference type="Pfam" id="PF02775">
    <property type="entry name" value="TPP_enzyme_C"/>
    <property type="match status" value="1"/>
</dbReference>
<dbReference type="Pfam" id="PF00205">
    <property type="entry name" value="TPP_enzyme_M"/>
    <property type="match status" value="1"/>
</dbReference>
<dbReference type="Pfam" id="PF02776">
    <property type="entry name" value="TPP_enzyme_N"/>
    <property type="match status" value="1"/>
</dbReference>
<dbReference type="PIRSF" id="PIRSF036565">
    <property type="entry name" value="Pyruvt_ip_decrb"/>
    <property type="match status" value="1"/>
</dbReference>
<dbReference type="SUPFAM" id="SSF52467">
    <property type="entry name" value="DHS-like NAD/FAD-binding domain"/>
    <property type="match status" value="1"/>
</dbReference>
<dbReference type="SUPFAM" id="SSF52518">
    <property type="entry name" value="Thiamin diphosphate-binding fold (THDP-binding)"/>
    <property type="match status" value="2"/>
</dbReference>
<comment type="catalytic activity">
    <reaction>
        <text>a 2-oxocarboxylate + H(+) = an aldehyde + CO2</text>
        <dbReference type="Rhea" id="RHEA:11628"/>
        <dbReference type="ChEBI" id="CHEBI:15378"/>
        <dbReference type="ChEBI" id="CHEBI:16526"/>
        <dbReference type="ChEBI" id="CHEBI:17478"/>
        <dbReference type="ChEBI" id="CHEBI:35179"/>
        <dbReference type="EC" id="4.1.1.1"/>
    </reaction>
</comment>
<comment type="catalytic activity">
    <reaction evidence="2">
        <text>pyruvate + H(+) = acetaldehyde + CO2</text>
        <dbReference type="Rhea" id="RHEA:45484"/>
        <dbReference type="ChEBI" id="CHEBI:15343"/>
        <dbReference type="ChEBI" id="CHEBI:15361"/>
        <dbReference type="ChEBI" id="CHEBI:15378"/>
        <dbReference type="ChEBI" id="CHEBI:16526"/>
    </reaction>
</comment>
<comment type="cofactor">
    <cofactor evidence="2">
        <name>Mg(2+)</name>
        <dbReference type="ChEBI" id="CHEBI:18420"/>
    </cofactor>
    <text evidence="2">Binds 1 Mg(2+) per subunit.</text>
</comment>
<comment type="cofactor">
    <cofactor evidence="2">
        <name>thiamine diphosphate</name>
        <dbReference type="ChEBI" id="CHEBI:58937"/>
    </cofactor>
    <text evidence="2">Binds 1 thiamine pyrophosphate per subunit.</text>
</comment>
<comment type="subunit">
    <text evidence="1">Homotetramer.</text>
</comment>
<comment type="subcellular location">
    <subcellularLocation>
        <location evidence="3">Cytoplasm</location>
    </subcellularLocation>
    <subcellularLocation>
        <location evidence="3">Nucleus</location>
    </subcellularLocation>
</comment>
<comment type="similarity">
    <text evidence="4">Belongs to the TPP enzyme family.</text>
</comment>
<accession>O42873</accession>
<name>PDC4_SCHPO</name>
<sequence>MSSEKVLVGEYLFTRLLQLGIKSILGVPGDFNLALLDLIEKVGDETFRWVGNENELNGAYAADAYARVKGISAIVTTFGVGELSALNGFAGAYSERIPVVHIVGVPNTKAQATRPLLHHTLGNGDFKVFQRMSSELSADVAFLDSGDSAGRLIDNLLETCVRTSRPVYLAVPSDAGYFYTDASPLKTPLVFPVPENNKEIEHEVVSEILELIEKSKNPSILVDACVSRFHIQQETQDFIDATHFPTYVTPMGKTAINESSPYFDGVYIGSLTEPSIKERAESTDLLLIIGGLRSDFNSGTFTYATPASQTIEFHSDYTKIRSGVYEGISMKHLLPKLTAAIDKKSVQAKARPVHFEPPKAVAAEGYAEGTITHKWFWPTFASFLRESDVVTTETGTSNFGILDCIFPKGCQNLSQVLWGSIGWSVGAMFGATLGIKDSDAPHRRSILIVGDGSLHLTVQEISATIRNGLTPIIFVINNKGYTIERLIHGLHAVYNDINTEWDYQNLLKGYGAKNSRSYNIHSEKELLDLFKDEEFGKADVIQLVEVHMPVLDAPRVLIEQAKLTASLNKQ</sequence>
<proteinExistence type="inferred from homology"/>
<gene>
    <name type="ORF">SPAC3G9.11c</name>
</gene>
<feature type="chain" id="PRO_0000316039" description="Putative pyruvate decarboxylase C3G9.11c">
    <location>
        <begin position="1"/>
        <end position="570"/>
    </location>
</feature>
<feature type="binding site" evidence="2">
    <location>
        <position position="30"/>
    </location>
    <ligand>
        <name>pyruvate</name>
        <dbReference type="ChEBI" id="CHEBI:15361"/>
        <note>ligand shared between two neighboring subunits</note>
    </ligand>
</feature>
<feature type="binding site" evidence="2">
    <location>
        <position position="119"/>
    </location>
    <ligand>
        <name>pyruvate</name>
        <dbReference type="ChEBI" id="CHEBI:15361"/>
        <note>ligand shared between two neighboring subunits</note>
    </ligand>
</feature>
<feature type="binding site" evidence="2">
    <location>
        <position position="396"/>
    </location>
    <ligand>
        <name>thiamine diphosphate</name>
        <dbReference type="ChEBI" id="CHEBI:58937"/>
    </ligand>
</feature>
<feature type="binding site" evidence="2">
    <location>
        <begin position="419"/>
        <end position="421"/>
    </location>
    <ligand>
        <name>thiamine diphosphate</name>
        <dbReference type="ChEBI" id="CHEBI:58937"/>
    </ligand>
</feature>
<feature type="binding site" evidence="2">
    <location>
        <position position="451"/>
    </location>
    <ligand>
        <name>Mg(2+)</name>
        <dbReference type="ChEBI" id="CHEBI:18420"/>
    </ligand>
</feature>
<feature type="binding site" evidence="2">
    <location>
        <begin position="452"/>
        <end position="453"/>
    </location>
    <ligand>
        <name>thiamine diphosphate</name>
        <dbReference type="ChEBI" id="CHEBI:58937"/>
    </ligand>
</feature>
<feature type="binding site" evidence="2">
    <location>
        <begin position="478"/>
        <end position="483"/>
    </location>
    <ligand>
        <name>thiamine diphosphate</name>
        <dbReference type="ChEBI" id="CHEBI:58937"/>
    </ligand>
</feature>
<feature type="binding site" evidence="2">
    <location>
        <position position="478"/>
    </location>
    <ligand>
        <name>Mg(2+)</name>
        <dbReference type="ChEBI" id="CHEBI:18420"/>
    </ligand>
</feature>
<feature type="binding site" evidence="2">
    <location>
        <position position="480"/>
    </location>
    <ligand>
        <name>Mg(2+)</name>
        <dbReference type="ChEBI" id="CHEBI:18420"/>
    </ligand>
</feature>
<feature type="binding site" evidence="2">
    <location>
        <position position="484"/>
    </location>
    <ligand>
        <name>pyruvate</name>
        <dbReference type="ChEBI" id="CHEBI:15361"/>
        <note>ligand shared between two neighboring subunits</note>
    </ligand>
</feature>
<protein>
    <recommendedName>
        <fullName>Putative pyruvate decarboxylase C3G9.11c</fullName>
        <ecNumber>4.1.1.1</ecNumber>
    </recommendedName>
</protein>
<organism>
    <name type="scientific">Schizosaccharomyces pombe (strain 972 / ATCC 24843)</name>
    <name type="common">Fission yeast</name>
    <dbReference type="NCBI Taxonomy" id="284812"/>
    <lineage>
        <taxon>Eukaryota</taxon>
        <taxon>Fungi</taxon>
        <taxon>Dikarya</taxon>
        <taxon>Ascomycota</taxon>
        <taxon>Taphrinomycotina</taxon>
        <taxon>Schizosaccharomycetes</taxon>
        <taxon>Schizosaccharomycetales</taxon>
        <taxon>Schizosaccharomycetaceae</taxon>
        <taxon>Schizosaccharomyces</taxon>
    </lineage>
</organism>
<keyword id="KW-0963">Cytoplasm</keyword>
<keyword id="KW-0210">Decarboxylase</keyword>
<keyword id="KW-0456">Lyase</keyword>
<keyword id="KW-0460">Magnesium</keyword>
<keyword id="KW-0479">Metal-binding</keyword>
<keyword id="KW-0539">Nucleus</keyword>
<keyword id="KW-0670">Pyruvate</keyword>
<keyword id="KW-1185">Reference proteome</keyword>
<keyword id="KW-0786">Thiamine pyrophosphate</keyword>
<reference key="1">
    <citation type="journal article" date="2002" name="Nature">
        <title>The genome sequence of Schizosaccharomyces pombe.</title>
        <authorList>
            <person name="Wood V."/>
            <person name="Gwilliam R."/>
            <person name="Rajandream M.A."/>
            <person name="Lyne M.H."/>
            <person name="Lyne R."/>
            <person name="Stewart A."/>
            <person name="Sgouros J.G."/>
            <person name="Peat N."/>
            <person name="Hayles J."/>
            <person name="Baker S.G."/>
            <person name="Basham D."/>
            <person name="Bowman S."/>
            <person name="Brooks K."/>
            <person name="Brown D."/>
            <person name="Brown S."/>
            <person name="Chillingworth T."/>
            <person name="Churcher C.M."/>
            <person name="Collins M."/>
            <person name="Connor R."/>
            <person name="Cronin A."/>
            <person name="Davis P."/>
            <person name="Feltwell T."/>
            <person name="Fraser A."/>
            <person name="Gentles S."/>
            <person name="Goble A."/>
            <person name="Hamlin N."/>
            <person name="Harris D.E."/>
            <person name="Hidalgo J."/>
            <person name="Hodgson G."/>
            <person name="Holroyd S."/>
            <person name="Hornsby T."/>
            <person name="Howarth S."/>
            <person name="Huckle E.J."/>
            <person name="Hunt S."/>
            <person name="Jagels K."/>
            <person name="James K.D."/>
            <person name="Jones L."/>
            <person name="Jones M."/>
            <person name="Leather S."/>
            <person name="McDonald S."/>
            <person name="McLean J."/>
            <person name="Mooney P."/>
            <person name="Moule S."/>
            <person name="Mungall K.L."/>
            <person name="Murphy L.D."/>
            <person name="Niblett D."/>
            <person name="Odell C."/>
            <person name="Oliver K."/>
            <person name="O'Neil S."/>
            <person name="Pearson D."/>
            <person name="Quail M.A."/>
            <person name="Rabbinowitsch E."/>
            <person name="Rutherford K.M."/>
            <person name="Rutter S."/>
            <person name="Saunders D."/>
            <person name="Seeger K."/>
            <person name="Sharp S."/>
            <person name="Skelton J."/>
            <person name="Simmonds M.N."/>
            <person name="Squares R."/>
            <person name="Squares S."/>
            <person name="Stevens K."/>
            <person name="Taylor K."/>
            <person name="Taylor R.G."/>
            <person name="Tivey A."/>
            <person name="Walsh S.V."/>
            <person name="Warren T."/>
            <person name="Whitehead S."/>
            <person name="Woodward J.R."/>
            <person name="Volckaert G."/>
            <person name="Aert R."/>
            <person name="Robben J."/>
            <person name="Grymonprez B."/>
            <person name="Weltjens I."/>
            <person name="Vanstreels E."/>
            <person name="Rieger M."/>
            <person name="Schaefer M."/>
            <person name="Mueller-Auer S."/>
            <person name="Gabel C."/>
            <person name="Fuchs M."/>
            <person name="Duesterhoeft A."/>
            <person name="Fritzc C."/>
            <person name="Holzer E."/>
            <person name="Moestl D."/>
            <person name="Hilbert H."/>
            <person name="Borzym K."/>
            <person name="Langer I."/>
            <person name="Beck A."/>
            <person name="Lehrach H."/>
            <person name="Reinhardt R."/>
            <person name="Pohl T.M."/>
            <person name="Eger P."/>
            <person name="Zimmermann W."/>
            <person name="Wedler H."/>
            <person name="Wambutt R."/>
            <person name="Purnelle B."/>
            <person name="Goffeau A."/>
            <person name="Cadieu E."/>
            <person name="Dreano S."/>
            <person name="Gloux S."/>
            <person name="Lelaure V."/>
            <person name="Mottier S."/>
            <person name="Galibert F."/>
            <person name="Aves S.J."/>
            <person name="Xiang Z."/>
            <person name="Hunt C."/>
            <person name="Moore K."/>
            <person name="Hurst S.M."/>
            <person name="Lucas M."/>
            <person name="Rochet M."/>
            <person name="Gaillardin C."/>
            <person name="Tallada V.A."/>
            <person name="Garzon A."/>
            <person name="Thode G."/>
            <person name="Daga R.R."/>
            <person name="Cruzado L."/>
            <person name="Jimenez J."/>
            <person name="Sanchez M."/>
            <person name="del Rey F."/>
            <person name="Benito J."/>
            <person name="Dominguez A."/>
            <person name="Revuelta J.L."/>
            <person name="Moreno S."/>
            <person name="Armstrong J."/>
            <person name="Forsburg S.L."/>
            <person name="Cerutti L."/>
            <person name="Lowe T."/>
            <person name="McCombie W.R."/>
            <person name="Paulsen I."/>
            <person name="Potashkin J."/>
            <person name="Shpakovski G.V."/>
            <person name="Ussery D."/>
            <person name="Barrell B.G."/>
            <person name="Nurse P."/>
        </authorList>
    </citation>
    <scope>NUCLEOTIDE SEQUENCE [LARGE SCALE GENOMIC DNA]</scope>
    <source>
        <strain>972 / ATCC 24843</strain>
    </source>
</reference>
<reference key="2">
    <citation type="journal article" date="2006" name="Nat. Biotechnol.">
        <title>ORFeome cloning and global analysis of protein localization in the fission yeast Schizosaccharomyces pombe.</title>
        <authorList>
            <person name="Matsuyama A."/>
            <person name="Arai R."/>
            <person name="Yashiroda Y."/>
            <person name="Shirai A."/>
            <person name="Kamata A."/>
            <person name="Sekido S."/>
            <person name="Kobayashi Y."/>
            <person name="Hashimoto A."/>
            <person name="Hamamoto M."/>
            <person name="Hiraoka Y."/>
            <person name="Horinouchi S."/>
            <person name="Yoshida M."/>
        </authorList>
    </citation>
    <scope>SUBCELLULAR LOCATION [LARGE SCALE ANALYSIS]</scope>
</reference>